<evidence type="ECO:0000255" key="1">
    <source>
        <dbReference type="HAMAP-Rule" id="MF_00272"/>
    </source>
</evidence>
<evidence type="ECO:0000255" key="2">
    <source>
        <dbReference type="PROSITE-ProRule" id="PRU01066"/>
    </source>
</evidence>
<reference key="1">
    <citation type="journal article" date="2008" name="Proc. Natl. Acad. Sci. U.S.A.">
        <title>Complete genome of the uncultured termite group 1 bacteria in a single host protist cell.</title>
        <authorList>
            <person name="Hongoh Y."/>
            <person name="Sharma V.K."/>
            <person name="Prakash T."/>
            <person name="Noda S."/>
            <person name="Taylor T.D."/>
            <person name="Kudo T."/>
            <person name="Sakaki Y."/>
            <person name="Toyoda A."/>
            <person name="Hattori M."/>
            <person name="Ohkuma M."/>
        </authorList>
    </citation>
    <scope>NUCLEOTIDE SEQUENCE [LARGE SCALE GENOMIC DNA]</scope>
</reference>
<name>GCSH_ENDTX</name>
<proteinExistence type="inferred from homology"/>
<organism>
    <name type="scientific">Endomicrobium trichonymphae</name>
    <dbReference type="NCBI Taxonomy" id="1408204"/>
    <lineage>
        <taxon>Bacteria</taxon>
        <taxon>Pseudomonadati</taxon>
        <taxon>Elusimicrobiota</taxon>
        <taxon>Endomicrobiia</taxon>
        <taxon>Endomicrobiales</taxon>
        <taxon>Endomicrobiaceae</taxon>
        <taxon>Candidatus Endomicrobiellum</taxon>
    </lineage>
</organism>
<sequence length="124" mass="13987">MNIPQDLKYTKTHEWVKIDGNKAKVGITDFAQYEITDVVHVELPEIGKQVKKAQPAAVVESVKSAFDIYSPLSGKILEVNDSVLRSPEVINQSPYENGYLFIIEFTDEKEIADLLEADSYKNLI</sequence>
<feature type="chain" id="PRO_1000204754" description="Glycine cleavage system H protein">
    <location>
        <begin position="1"/>
        <end position="124"/>
    </location>
</feature>
<feature type="domain" description="Lipoyl-binding" evidence="2">
    <location>
        <begin position="22"/>
        <end position="104"/>
    </location>
</feature>
<feature type="modified residue" description="N6-lipoyllysine" evidence="1">
    <location>
        <position position="63"/>
    </location>
</feature>
<accession>B1GYV6</accession>
<comment type="function">
    <text evidence="1">The glycine cleavage system catalyzes the degradation of glycine. The H protein shuttles the methylamine group of glycine from the P protein to the T protein.</text>
</comment>
<comment type="cofactor">
    <cofactor evidence="1">
        <name>(R)-lipoate</name>
        <dbReference type="ChEBI" id="CHEBI:83088"/>
    </cofactor>
    <text evidence="1">Binds 1 lipoyl cofactor covalently.</text>
</comment>
<comment type="subunit">
    <text evidence="1">The glycine cleavage system is composed of four proteins: P, T, L and H.</text>
</comment>
<comment type="similarity">
    <text evidence="1">Belongs to the GcvH family.</text>
</comment>
<dbReference type="EMBL" id="AP009510">
    <property type="protein sequence ID" value="BAG14199.1"/>
    <property type="molecule type" value="Genomic_DNA"/>
</dbReference>
<dbReference type="RefSeq" id="WP_015423720.1">
    <property type="nucleotide sequence ID" value="NC_020419.1"/>
</dbReference>
<dbReference type="SMR" id="B1GYV6"/>
<dbReference type="STRING" id="471821.TGRD_716"/>
<dbReference type="KEGG" id="eti:RSTT_677"/>
<dbReference type="KEGG" id="rsd:TGRD_716"/>
<dbReference type="PATRIC" id="fig|471821.5.peg.1222"/>
<dbReference type="HOGENOM" id="CLU_097408_2_2_0"/>
<dbReference type="OrthoDB" id="9796712at2"/>
<dbReference type="Proteomes" id="UP000001691">
    <property type="component" value="Chromosome"/>
</dbReference>
<dbReference type="GO" id="GO:0005829">
    <property type="term" value="C:cytosol"/>
    <property type="evidence" value="ECO:0007669"/>
    <property type="project" value="TreeGrafter"/>
</dbReference>
<dbReference type="GO" id="GO:0005960">
    <property type="term" value="C:glycine cleavage complex"/>
    <property type="evidence" value="ECO:0007669"/>
    <property type="project" value="InterPro"/>
</dbReference>
<dbReference type="GO" id="GO:0019464">
    <property type="term" value="P:glycine decarboxylation via glycine cleavage system"/>
    <property type="evidence" value="ECO:0007669"/>
    <property type="project" value="UniProtKB-UniRule"/>
</dbReference>
<dbReference type="CDD" id="cd06848">
    <property type="entry name" value="GCS_H"/>
    <property type="match status" value="1"/>
</dbReference>
<dbReference type="Gene3D" id="2.40.50.100">
    <property type="match status" value="1"/>
</dbReference>
<dbReference type="HAMAP" id="MF_00272">
    <property type="entry name" value="GcvH"/>
    <property type="match status" value="1"/>
</dbReference>
<dbReference type="InterPro" id="IPR003016">
    <property type="entry name" value="2-oxoA_DH_lipoyl-BS"/>
</dbReference>
<dbReference type="InterPro" id="IPR000089">
    <property type="entry name" value="Biotin_lipoyl"/>
</dbReference>
<dbReference type="InterPro" id="IPR002930">
    <property type="entry name" value="GCV_H"/>
</dbReference>
<dbReference type="InterPro" id="IPR033753">
    <property type="entry name" value="GCV_H/Fam206"/>
</dbReference>
<dbReference type="InterPro" id="IPR017453">
    <property type="entry name" value="GCV_H_sub"/>
</dbReference>
<dbReference type="InterPro" id="IPR011053">
    <property type="entry name" value="Single_hybrid_motif"/>
</dbReference>
<dbReference type="NCBIfam" id="TIGR00527">
    <property type="entry name" value="gcvH"/>
    <property type="match status" value="1"/>
</dbReference>
<dbReference type="NCBIfam" id="NF002270">
    <property type="entry name" value="PRK01202.1"/>
    <property type="match status" value="1"/>
</dbReference>
<dbReference type="PANTHER" id="PTHR11715">
    <property type="entry name" value="GLYCINE CLEAVAGE SYSTEM H PROTEIN"/>
    <property type="match status" value="1"/>
</dbReference>
<dbReference type="PANTHER" id="PTHR11715:SF3">
    <property type="entry name" value="GLYCINE CLEAVAGE SYSTEM H PROTEIN-RELATED"/>
    <property type="match status" value="1"/>
</dbReference>
<dbReference type="Pfam" id="PF01597">
    <property type="entry name" value="GCV_H"/>
    <property type="match status" value="1"/>
</dbReference>
<dbReference type="SUPFAM" id="SSF51230">
    <property type="entry name" value="Single hybrid motif"/>
    <property type="match status" value="1"/>
</dbReference>
<dbReference type="PROSITE" id="PS50968">
    <property type="entry name" value="BIOTINYL_LIPOYL"/>
    <property type="match status" value="1"/>
</dbReference>
<dbReference type="PROSITE" id="PS00189">
    <property type="entry name" value="LIPOYL"/>
    <property type="match status" value="1"/>
</dbReference>
<keyword id="KW-0450">Lipoyl</keyword>
<protein>
    <recommendedName>
        <fullName evidence="1">Glycine cleavage system H protein</fullName>
    </recommendedName>
</protein>
<gene>
    <name evidence="1" type="primary">gcvH</name>
    <name type="ordered locus">TGRD_716</name>
</gene>